<feature type="transit peptide" description="Chloroplast" evidence="3">
    <location>
        <begin position="1"/>
        <end position="58"/>
    </location>
</feature>
<feature type="chain" id="PRO_0000425667" description="Anthranilate synthase beta subunit 1, chloroplastic">
    <location>
        <begin position="59"/>
        <end position="288"/>
    </location>
</feature>
<feature type="domain" description="Glutamine amidotransferase type-1" evidence="4">
    <location>
        <begin position="83"/>
        <end position="282"/>
    </location>
</feature>
<feature type="active site" description="Nucleophile" evidence="4">
    <location>
        <position position="161"/>
    </location>
</feature>
<feature type="active site" evidence="4">
    <location>
        <position position="256"/>
    </location>
</feature>
<feature type="active site" evidence="4">
    <location>
        <position position="258"/>
    </location>
</feature>
<feature type="binding site" evidence="1">
    <location>
        <begin position="134"/>
        <end position="136"/>
    </location>
    <ligand>
        <name>L-glutamine</name>
        <dbReference type="ChEBI" id="CHEBI:58359"/>
    </ligand>
</feature>
<feature type="binding site" evidence="1">
    <location>
        <position position="165"/>
    </location>
    <ligand>
        <name>L-glutamine</name>
        <dbReference type="ChEBI" id="CHEBI:58359"/>
    </ligand>
</feature>
<feature type="binding site" evidence="1">
    <location>
        <begin position="215"/>
        <end position="216"/>
    </location>
    <ligand>
        <name>L-glutamine</name>
        <dbReference type="ChEBI" id="CHEBI:58359"/>
    </ligand>
</feature>
<name>ASB1_ORYSJ</name>
<keyword id="KW-0028">Amino-acid biosynthesis</keyword>
<keyword id="KW-0057">Aromatic amino acid biosynthesis</keyword>
<keyword id="KW-0150">Chloroplast</keyword>
<keyword id="KW-0315">Glutamine amidotransferase</keyword>
<keyword id="KW-0456">Lyase</keyword>
<keyword id="KW-0934">Plastid</keyword>
<keyword id="KW-1185">Reference proteome</keyword>
<keyword id="KW-0809">Transit peptide</keyword>
<keyword id="KW-0822">Tryptophan biosynthesis</keyword>
<evidence type="ECO:0000250" key="1">
    <source>
        <dbReference type="UniProtKB" id="P00900"/>
    </source>
</evidence>
<evidence type="ECO:0000250" key="2">
    <source>
        <dbReference type="UniProtKB" id="P00905"/>
    </source>
</evidence>
<evidence type="ECO:0000255" key="3"/>
<evidence type="ECO:0000255" key="4">
    <source>
        <dbReference type="PROSITE-ProRule" id="PRU00605"/>
    </source>
</evidence>
<evidence type="ECO:0000269" key="5">
    <source>
    </source>
</evidence>
<evidence type="ECO:0000269" key="6">
    <source>
    </source>
</evidence>
<evidence type="ECO:0000303" key="7">
    <source>
    </source>
</evidence>
<evidence type="ECO:0000312" key="8">
    <source>
        <dbReference type="EMBL" id="CAD41042.1"/>
    </source>
</evidence>
<evidence type="ECO:0000312" key="9">
    <source>
        <dbReference type="EMBL" id="CAE76011.1"/>
    </source>
</evidence>
<proteinExistence type="evidence at protein level"/>
<comment type="function">
    <text evidence="5">Part of a heterotetrameric complex that catalyzes the two-step biosynthesis of anthranilate, an intermediate in the biosynthesis of L-tryptophan. In the first step, the glutamine-binding beta subunit of anthranilate synthase (AS) provides the glutamine amidotransferase activity which generates ammonia as a substrate that, along with chorismate, is used in the second step, catalyzed by the large alpha subunit of AS to produce anthranilate.</text>
</comment>
<comment type="catalytic activity">
    <reaction evidence="5">
        <text>chorismate + L-glutamine = anthranilate + pyruvate + L-glutamate + H(+)</text>
        <dbReference type="Rhea" id="RHEA:21732"/>
        <dbReference type="ChEBI" id="CHEBI:15361"/>
        <dbReference type="ChEBI" id="CHEBI:15378"/>
        <dbReference type="ChEBI" id="CHEBI:16567"/>
        <dbReference type="ChEBI" id="CHEBI:29748"/>
        <dbReference type="ChEBI" id="CHEBI:29985"/>
        <dbReference type="ChEBI" id="CHEBI:58359"/>
        <dbReference type="EC" id="4.1.3.27"/>
    </reaction>
    <physiologicalReaction direction="left-to-right" evidence="5">
        <dbReference type="Rhea" id="RHEA:21733"/>
    </physiologicalReaction>
</comment>
<comment type="biophysicochemical properties">
    <kinetics>
        <KM evidence="5">121 uM for chorismate (for recombinant ASA1 and ASB1 proteins synthesized with the wheat germ cell-free system)</KM>
        <KM evidence="5">178 uM for chorismate (for recombinant ASA2 and ASB1 proteins synthesized with the wheat germ cell-free system)</KM>
        <Vmax evidence="5">231.0 nmol/min/mg enzyme toward chorismate (for recombinant ASA1 and ASB1 proteins synthesized with the wheat germ cell-free system)</Vmax>
        <Vmax evidence="5">75.6 nmol/min/mg enzyme toward chorismate (for recombinant ASA2 and ASB1 proteins synthesized with the wheat germ cell-free system)</Vmax>
        <text>kcat is 34.7 sec(-1) with chorismate as substrate (for recombinant ASA1 and ASB1 proteins synthesized with the wheat germ cell-free system). kcat is 14.6 sec(-1) with chorismate as substrate (for recombinant ASA2 and ASB1 proteins synthesized with the wheat germ cell-free system).</text>
    </kinetics>
</comment>
<comment type="pathway">
    <text evidence="5">Amino-acid biosynthesis; L-tryptophan biosynthesis; L-tryptophan from chorismate: step 1/5.</text>
</comment>
<comment type="subunit">
    <text evidence="2">Heterotetramer consisting of two non-identical subunits: a beta subunit and a large alpha subunit.</text>
</comment>
<comment type="subcellular location">
    <subcellularLocation>
        <location evidence="3">Plastid</location>
        <location evidence="3">Chloroplast</location>
    </subcellularLocation>
</comment>
<comment type="tissue specificity">
    <text evidence="5">Expressed in roots and leaves.</text>
</comment>
<comment type="induction">
    <text evidence="6">By the phytopathogenic fungus Bipolaris oryzae.</text>
</comment>
<gene>
    <name evidence="7" type="primary">ASB1</name>
    <name evidence="7" type="synonym">OASB1</name>
    <name type="ordered locus">Os04g0463500</name>
    <name type="ordered locus">LOC_Os04g38950</name>
    <name evidence="9" type="ORF">B1358B12.20</name>
    <name evidence="8" type="ORF">OSJNBa0060P14.1</name>
</gene>
<dbReference type="EC" id="4.1.3.27" evidence="5"/>
<dbReference type="EMBL" id="AB116721">
    <property type="protein sequence ID" value="BAD11023.1"/>
    <property type="molecule type" value="mRNA"/>
</dbReference>
<dbReference type="EMBL" id="AL663017">
    <property type="protein sequence ID" value="CAD41042.1"/>
    <property type="molecule type" value="Genomic_DNA"/>
</dbReference>
<dbReference type="EMBL" id="BX842605">
    <property type="protein sequence ID" value="CAE76011.1"/>
    <property type="molecule type" value="Genomic_DNA"/>
</dbReference>
<dbReference type="EMBL" id="AP008210">
    <property type="protein sequence ID" value="BAF14925.1"/>
    <property type="molecule type" value="Genomic_DNA"/>
</dbReference>
<dbReference type="EMBL" id="AP014960">
    <property type="protein sequence ID" value="BAS89576.1"/>
    <property type="molecule type" value="Genomic_DNA"/>
</dbReference>
<dbReference type="RefSeq" id="XP_015636125.1">
    <property type="nucleotide sequence ID" value="XM_015780639.1"/>
</dbReference>
<dbReference type="SMR" id="Q7XUS2"/>
<dbReference type="FunCoup" id="Q7XUS2">
    <property type="interactions" value="194"/>
</dbReference>
<dbReference type="STRING" id="39947.Q7XUS2"/>
<dbReference type="MEROPS" id="C26.A09"/>
<dbReference type="PaxDb" id="39947-Q7XUS2"/>
<dbReference type="EnsemblPlants" id="Os04t0463500-01">
    <property type="protein sequence ID" value="Os04t0463500-01"/>
    <property type="gene ID" value="Os04g0463500"/>
</dbReference>
<dbReference type="Gramene" id="Os04t0463500-01">
    <property type="protein sequence ID" value="Os04t0463500-01"/>
    <property type="gene ID" value="Os04g0463500"/>
</dbReference>
<dbReference type="KEGG" id="dosa:Os04g0463500"/>
<dbReference type="eggNOG" id="KOG0026">
    <property type="taxonomic scope" value="Eukaryota"/>
</dbReference>
<dbReference type="HOGENOM" id="CLU_014340_1_3_1"/>
<dbReference type="InParanoid" id="Q7XUS2"/>
<dbReference type="OMA" id="IGLYHSW"/>
<dbReference type="OrthoDB" id="524799at2759"/>
<dbReference type="PlantReactome" id="R-OSA-1119494">
    <property type="pathway name" value="Tryptophan biosynthesis"/>
</dbReference>
<dbReference type="PlantReactome" id="R-OSA-9631623">
    <property type="pathway name" value="Regulation of embryo development"/>
</dbReference>
<dbReference type="UniPathway" id="UPA00035">
    <property type="reaction ID" value="UER00040"/>
</dbReference>
<dbReference type="Proteomes" id="UP000000763">
    <property type="component" value="Chromosome 4"/>
</dbReference>
<dbReference type="Proteomes" id="UP000059680">
    <property type="component" value="Chromosome 4"/>
</dbReference>
<dbReference type="GO" id="GO:0005950">
    <property type="term" value="C:anthranilate synthase complex"/>
    <property type="evidence" value="ECO:0000304"/>
    <property type="project" value="UniProtKB"/>
</dbReference>
<dbReference type="GO" id="GO:0009507">
    <property type="term" value="C:chloroplast"/>
    <property type="evidence" value="ECO:0007669"/>
    <property type="project" value="UniProtKB-SubCell"/>
</dbReference>
<dbReference type="GO" id="GO:0004049">
    <property type="term" value="F:anthranilate synthase activity"/>
    <property type="evidence" value="ECO:0000314"/>
    <property type="project" value="UniProtKB"/>
</dbReference>
<dbReference type="GO" id="GO:0000162">
    <property type="term" value="P:L-tryptophan biosynthetic process"/>
    <property type="evidence" value="ECO:0000314"/>
    <property type="project" value="UniProtKB"/>
</dbReference>
<dbReference type="CDD" id="cd01743">
    <property type="entry name" value="GATase1_Anthranilate_Synthase"/>
    <property type="match status" value="1"/>
</dbReference>
<dbReference type="FunFam" id="3.40.50.880:FF:000027">
    <property type="entry name" value="Anthranilate synthase beta subunit 1"/>
    <property type="match status" value="1"/>
</dbReference>
<dbReference type="Gene3D" id="3.40.50.880">
    <property type="match status" value="1"/>
</dbReference>
<dbReference type="InterPro" id="IPR050472">
    <property type="entry name" value="Anth_synth/Amidotransfase"/>
</dbReference>
<dbReference type="InterPro" id="IPR029062">
    <property type="entry name" value="Class_I_gatase-like"/>
</dbReference>
<dbReference type="InterPro" id="IPR017926">
    <property type="entry name" value="GATASE"/>
</dbReference>
<dbReference type="InterPro" id="IPR006221">
    <property type="entry name" value="TrpG/PapA_dom"/>
</dbReference>
<dbReference type="NCBIfam" id="TIGR00566">
    <property type="entry name" value="trpG_papA"/>
    <property type="match status" value="1"/>
</dbReference>
<dbReference type="PANTHER" id="PTHR43418:SF16">
    <property type="entry name" value="ANTHRANILATE SYNTHASE BETA SUBUNIT 1, CHLOROPLASTIC"/>
    <property type="match status" value="1"/>
</dbReference>
<dbReference type="PANTHER" id="PTHR43418">
    <property type="entry name" value="MULTIFUNCTIONAL TRYPTOPHAN BIOSYNTHESIS PROTEIN-RELATED"/>
    <property type="match status" value="1"/>
</dbReference>
<dbReference type="Pfam" id="PF00117">
    <property type="entry name" value="GATase"/>
    <property type="match status" value="1"/>
</dbReference>
<dbReference type="PRINTS" id="PR00097">
    <property type="entry name" value="ANTSNTHASEII"/>
</dbReference>
<dbReference type="PRINTS" id="PR00099">
    <property type="entry name" value="CPSGATASE"/>
</dbReference>
<dbReference type="PRINTS" id="PR00096">
    <property type="entry name" value="GATASE"/>
</dbReference>
<dbReference type="SUPFAM" id="SSF52317">
    <property type="entry name" value="Class I glutamine amidotransferase-like"/>
    <property type="match status" value="1"/>
</dbReference>
<dbReference type="PROSITE" id="PS51273">
    <property type="entry name" value="GATASE_TYPE_1"/>
    <property type="match status" value="1"/>
</dbReference>
<organism>
    <name type="scientific">Oryza sativa subsp. japonica</name>
    <name type="common">Rice</name>
    <dbReference type="NCBI Taxonomy" id="39947"/>
    <lineage>
        <taxon>Eukaryota</taxon>
        <taxon>Viridiplantae</taxon>
        <taxon>Streptophyta</taxon>
        <taxon>Embryophyta</taxon>
        <taxon>Tracheophyta</taxon>
        <taxon>Spermatophyta</taxon>
        <taxon>Magnoliopsida</taxon>
        <taxon>Liliopsida</taxon>
        <taxon>Poales</taxon>
        <taxon>Poaceae</taxon>
        <taxon>BOP clade</taxon>
        <taxon>Oryzoideae</taxon>
        <taxon>Oryzeae</taxon>
        <taxon>Oryzinae</taxon>
        <taxon>Oryza</taxon>
        <taxon>Oryza sativa</taxon>
    </lineage>
</organism>
<reference key="1">
    <citation type="journal article" date="2004" name="Plant Mol. Biol.">
        <title>In vitro reconstitution of rice anthranilate synthase: distinct functional properties of the alpha subunits OASA1 and OASA2.</title>
        <authorList>
            <person name="Kanno T."/>
            <person name="Kasai K."/>
            <person name="Ikejiri-Kanno Y."/>
            <person name="Wakasa K."/>
            <person name="Tozawa Y."/>
        </authorList>
    </citation>
    <scope>NUCLEOTIDE SEQUENCE [MRNA]</scope>
    <scope>FUNCTION</scope>
    <scope>CATALYTIC ACTIVITY</scope>
    <scope>BIOPHYSICOCHEMICAL PROPERTIES</scope>
    <scope>PATHWAY</scope>
    <scope>TISSUE SPECIFICITY</scope>
    <source>
        <strain>cv. Nipponbare</strain>
    </source>
</reference>
<reference key="2">
    <citation type="journal article" date="2002" name="Nature">
        <title>Sequence and analysis of rice chromosome 4.</title>
        <authorList>
            <person name="Feng Q."/>
            <person name="Zhang Y."/>
            <person name="Hao P."/>
            <person name="Wang S."/>
            <person name="Fu G."/>
            <person name="Huang Y."/>
            <person name="Li Y."/>
            <person name="Zhu J."/>
            <person name="Liu Y."/>
            <person name="Hu X."/>
            <person name="Jia P."/>
            <person name="Zhang Y."/>
            <person name="Zhao Q."/>
            <person name="Ying K."/>
            <person name="Yu S."/>
            <person name="Tang Y."/>
            <person name="Weng Q."/>
            <person name="Zhang L."/>
            <person name="Lu Y."/>
            <person name="Mu J."/>
            <person name="Lu Y."/>
            <person name="Zhang L.S."/>
            <person name="Yu Z."/>
            <person name="Fan D."/>
            <person name="Liu X."/>
            <person name="Lu T."/>
            <person name="Li C."/>
            <person name="Wu Y."/>
            <person name="Sun T."/>
            <person name="Lei H."/>
            <person name="Li T."/>
            <person name="Hu H."/>
            <person name="Guan J."/>
            <person name="Wu M."/>
            <person name="Zhang R."/>
            <person name="Zhou B."/>
            <person name="Chen Z."/>
            <person name="Chen L."/>
            <person name="Jin Z."/>
            <person name="Wang R."/>
            <person name="Yin H."/>
            <person name="Cai Z."/>
            <person name="Ren S."/>
            <person name="Lv G."/>
            <person name="Gu W."/>
            <person name="Zhu G."/>
            <person name="Tu Y."/>
            <person name="Jia J."/>
            <person name="Zhang Y."/>
            <person name="Chen J."/>
            <person name="Kang H."/>
            <person name="Chen X."/>
            <person name="Shao C."/>
            <person name="Sun Y."/>
            <person name="Hu Q."/>
            <person name="Zhang X."/>
            <person name="Zhang W."/>
            <person name="Wang L."/>
            <person name="Ding C."/>
            <person name="Sheng H."/>
            <person name="Gu J."/>
            <person name="Chen S."/>
            <person name="Ni L."/>
            <person name="Zhu F."/>
            <person name="Chen W."/>
            <person name="Lan L."/>
            <person name="Lai Y."/>
            <person name="Cheng Z."/>
            <person name="Gu M."/>
            <person name="Jiang J."/>
            <person name="Li J."/>
            <person name="Hong G."/>
            <person name="Xue Y."/>
            <person name="Han B."/>
        </authorList>
    </citation>
    <scope>NUCLEOTIDE SEQUENCE [LARGE SCALE GENOMIC DNA]</scope>
    <source>
        <strain>cv. Nipponbare</strain>
    </source>
</reference>
<reference key="3">
    <citation type="journal article" date="2005" name="Nature">
        <title>The map-based sequence of the rice genome.</title>
        <authorList>
            <consortium name="International rice genome sequencing project (IRGSP)"/>
        </authorList>
    </citation>
    <scope>NUCLEOTIDE SEQUENCE [LARGE SCALE GENOMIC DNA]</scope>
    <source>
        <strain>cv. Nipponbare</strain>
    </source>
</reference>
<reference key="4">
    <citation type="journal article" date="2008" name="Nucleic Acids Res.">
        <title>The rice annotation project database (RAP-DB): 2008 update.</title>
        <authorList>
            <consortium name="The rice annotation project (RAP)"/>
        </authorList>
    </citation>
    <scope>GENOME REANNOTATION</scope>
    <source>
        <strain>cv. Nipponbare</strain>
    </source>
</reference>
<reference key="5">
    <citation type="journal article" date="2013" name="Rice">
        <title>Improvement of the Oryza sativa Nipponbare reference genome using next generation sequence and optical map data.</title>
        <authorList>
            <person name="Kawahara Y."/>
            <person name="de la Bastide M."/>
            <person name="Hamilton J.P."/>
            <person name="Kanamori H."/>
            <person name="McCombie W.R."/>
            <person name="Ouyang S."/>
            <person name="Schwartz D.C."/>
            <person name="Tanaka T."/>
            <person name="Wu J."/>
            <person name="Zhou S."/>
            <person name="Childs K.L."/>
            <person name="Davidson R.M."/>
            <person name="Lin H."/>
            <person name="Quesada-Ocampo L."/>
            <person name="Vaillancourt B."/>
            <person name="Sakai H."/>
            <person name="Lee S.S."/>
            <person name="Kim J."/>
            <person name="Numa H."/>
            <person name="Itoh T."/>
            <person name="Buell C.R."/>
            <person name="Matsumoto T."/>
        </authorList>
    </citation>
    <scope>GENOME REANNOTATION</scope>
    <source>
        <strain>cv. Nipponbare</strain>
    </source>
</reference>
<reference key="6">
    <citation type="journal article" date="2008" name="Plant J.">
        <title>The tryptophan pathway is involved in the defense responses of rice against pathogenic infection via serotonin production.</title>
        <authorList>
            <person name="Ishihara A."/>
            <person name="Hashimoto Y."/>
            <person name="Tanaka C."/>
            <person name="Dubouzet J.G."/>
            <person name="Nakao T."/>
            <person name="Matsuda F."/>
            <person name="Nishioka T."/>
            <person name="Miyagawa H."/>
            <person name="Wakasa K."/>
        </authorList>
    </citation>
    <scope>INDUCTION</scope>
</reference>
<protein>
    <recommendedName>
        <fullName evidence="7">Anthranilate synthase beta subunit 1, chloroplastic</fullName>
        <shortName evidence="7">OsASB1</shortName>
        <ecNumber evidence="5">4.1.3.27</ecNumber>
    </recommendedName>
    <alternativeName>
        <fullName>Anthranilate synthase, glutamine amidotransferase component 2-1</fullName>
    </alternativeName>
</protein>
<sequence>MACSHLAAAAAAASPAAARSPAASSAATASAFARLSATPRVASGGLAVRGQRGVAAVVAAAAGAAAATPVADIEERRATEKQPIIVIDNYDSFTYNLCQYMGELGLNFEVYRNDELTIEDVKRKNPRGILISPGPGEPQDSGISLQTVLELGPTIPIFGVCMGLQCIGEAFGGKIIRAPSGVMHGKSSPVRYDEELGKALFNGLPNPFTAARYHSLVIEQETFPHDALEATAWTEDGLIMAARHKKYRHIQGVQFHPESIITPEGKRIILNFVRFIEELEKQRAGEKN</sequence>
<accession>Q7XUS2</accession>
<accession>A0A0P0WBC9</accession>